<sequence length="35" mass="3848">MFDTNATRLPIWGIGCNPWTAEHVDQTLASGNDIC</sequence>
<protein>
    <recommendedName>
        <fullName evidence="7">Alpha-amanitin proprotein 1</fullName>
    </recommendedName>
    <component>
        <recommendedName>
            <fullName evidence="7">Alpha-amanitin</fullName>
        </recommendedName>
        <alternativeName>
            <fullName evidence="8">Amatoxin</fullName>
        </alternativeName>
        <alternativeName>
            <fullName evidence="2">Gamma-amanitin</fullName>
        </alternativeName>
    </component>
</protein>
<name>AAMA1_GALM3</name>
<organism>
    <name type="scientific">Galerina marginata (strain CBS 339.88)</name>
    <dbReference type="NCBI Taxonomy" id="685588"/>
    <lineage>
        <taxon>Eukaryota</taxon>
        <taxon>Fungi</taxon>
        <taxon>Dikarya</taxon>
        <taxon>Basidiomycota</taxon>
        <taxon>Agaricomycotina</taxon>
        <taxon>Agaricomycetes</taxon>
        <taxon>Agaricomycetidae</taxon>
        <taxon>Agaricales</taxon>
        <taxon>Agaricineae</taxon>
        <taxon>Strophariaceae</taxon>
        <taxon>Galerina</taxon>
    </lineage>
</organism>
<dbReference type="EMBL" id="JN827311">
    <property type="protein sequence ID" value="AEX26935.1"/>
    <property type="molecule type" value="mRNA"/>
</dbReference>
<dbReference type="EMBL" id="KL142408">
    <property type="protein sequence ID" value="KDR68474.1"/>
    <property type="molecule type" value="Genomic_DNA"/>
</dbReference>
<dbReference type="PDB" id="5N4B">
    <property type="method" value="X-ray"/>
    <property type="resolution" value="1.44 A"/>
    <property type="chains" value="C/D=11-35"/>
</dbReference>
<dbReference type="PDB" id="5N4C">
    <property type="method" value="X-ray"/>
    <property type="resolution" value="2.19 A"/>
    <property type="chains" value="E/F/G/H=1-35"/>
</dbReference>
<dbReference type="PDB" id="5N4D">
    <property type="method" value="X-ray"/>
    <property type="resolution" value="1.62 A"/>
    <property type="chains" value="C/D=11-35"/>
</dbReference>
<dbReference type="PDB" id="5N4E">
    <property type="method" value="X-ray"/>
    <property type="resolution" value="2.90 A"/>
    <property type="chains" value="C/D=1-35"/>
</dbReference>
<dbReference type="PDBsum" id="5N4B"/>
<dbReference type="PDBsum" id="5N4C"/>
<dbReference type="PDBsum" id="5N4D"/>
<dbReference type="PDBsum" id="5N4E"/>
<dbReference type="SMR" id="A0A067SLB9"/>
<dbReference type="HOGENOM" id="CLU_3368581_0_0_1"/>
<dbReference type="Proteomes" id="UP000027222">
    <property type="component" value="Unassembled WGS sequence"/>
</dbReference>
<dbReference type="GO" id="GO:0090729">
    <property type="term" value="F:toxin activity"/>
    <property type="evidence" value="ECO:0007669"/>
    <property type="project" value="UniProtKB-KW"/>
</dbReference>
<dbReference type="InterPro" id="IPR027582">
    <property type="entry name" value="Amanitin/phalloidin"/>
</dbReference>
<dbReference type="NCBIfam" id="TIGR04309">
    <property type="entry name" value="amanitin"/>
    <property type="match status" value="1"/>
</dbReference>
<dbReference type="Pfam" id="PF24112">
    <property type="entry name" value="Amanitin"/>
    <property type="match status" value="1"/>
</dbReference>
<evidence type="ECO:0000250" key="1">
    <source>
        <dbReference type="UniProtKB" id="A8W7M4"/>
    </source>
</evidence>
<evidence type="ECO:0000250" key="2">
    <source>
        <dbReference type="UniProtKB" id="P85421"/>
    </source>
</evidence>
<evidence type="ECO:0000269" key="3">
    <source>
    </source>
</evidence>
<evidence type="ECO:0000269" key="4">
    <source>
    </source>
</evidence>
<evidence type="ECO:0000269" key="5">
    <source>
    </source>
</evidence>
<evidence type="ECO:0000303" key="6">
    <source>
    </source>
</evidence>
<evidence type="ECO:0000303" key="7">
    <source>
    </source>
</evidence>
<evidence type="ECO:0000303" key="8">
    <source>
    </source>
</evidence>
<evidence type="ECO:0000305" key="9"/>
<evidence type="ECO:0000305" key="10">
    <source>
    </source>
</evidence>
<evidence type="ECO:0007829" key="11">
    <source>
        <dbReference type="PDB" id="5N4B"/>
    </source>
</evidence>
<evidence type="ECO:0007829" key="12">
    <source>
        <dbReference type="PDB" id="5N4C"/>
    </source>
</evidence>
<comment type="function">
    <text evidence="4 5 10">Major toxin belonging to the bicyclic octapeptides amatoxins that acts by binding non-competitively to RNA polymerase II and greatly slowing the elongation of transcripts from target promoters (PubMed:22202811, PubMed:7642577, PubMed:8702941).</text>
</comment>
<comment type="PTM">
    <text evidence="3">Processed by the macrocyclase-peptidase enzyme POPB to yield a toxic bicyclic octapeptide (PubMed:29051530). POPB first removes 10 residues from the N-terminus (PubMed:29051530). Conformational trapping of the remaining peptide forces the enzyme to release this intermediate rather than proceed to macrocyclization (PubMed:29051530). The enzyme rebinds the remaining peptide in a different conformation and catalyzes macrocyclization of the N-terminal 8 residues (PubMed:29051530).</text>
</comment>
<comment type="miscellaneous">
    <text evidence="6">The typical symptoms of amatoxin poisoning are gastro-intestinal distress beginning 6-12 hours after ingestion, a remission phase lasting 12-24 hours, and progressive loss of liver function culminating in death within 3-5 days (PubMed:12475187). One of the few effective treatments is liver transplantation (PubMed:12475187).</text>
</comment>
<comment type="similarity">
    <text evidence="9">Belongs to the MSDIN fungal toxin family.</text>
</comment>
<accession>A0A067SLB9</accession>
<accession>H2E7Q5</accession>
<proteinExistence type="evidence at protein level"/>
<keyword id="KW-0002">3D-structure</keyword>
<keyword id="KW-0379">Hydroxylation</keyword>
<keyword id="KW-1185">Reference proteome</keyword>
<keyword id="KW-0883">Thioether bond</keyword>
<keyword id="KW-0800">Toxin</keyword>
<reference key="1">
    <citation type="journal article" date="2012" name="Fungal Genet. Biol.">
        <title>Ribosomal biosynthesis of alpha-amanitin in Galerina marginata.</title>
        <authorList>
            <person name="Luo H."/>
            <person name="Hallen-Adams H.E."/>
            <person name="Scott-Craig J.S."/>
            <person name="Walton J.D."/>
        </authorList>
    </citation>
    <scope>NUCLEOTIDE SEQUENCE [MRNA]</scope>
    <scope>PROCESSING</scope>
    <scope>FUNCTION</scope>
    <source>
        <strain>CBS 339.88</strain>
    </source>
</reference>
<reference key="2">
    <citation type="journal article" date="2014" name="Proc. Natl. Acad. Sci. U.S.A.">
        <title>Extensive sampling of basidiomycete genomes demonstrates inadequacy of the white-rot/brown-rot paradigm for wood decay fungi.</title>
        <authorList>
            <person name="Riley R."/>
            <person name="Salamov A.A."/>
            <person name="Brown D.W."/>
            <person name="Nagy L.G."/>
            <person name="Floudas D."/>
            <person name="Held B.W."/>
            <person name="Levasseur A."/>
            <person name="Lombard V."/>
            <person name="Morin E."/>
            <person name="Otillar R."/>
            <person name="Lindquist E.A."/>
            <person name="Sun H."/>
            <person name="LaButti K.M."/>
            <person name="Schmutz J."/>
            <person name="Jabbour D."/>
            <person name="Luo H."/>
            <person name="Baker S.E."/>
            <person name="Pisabarro A.G."/>
            <person name="Walton J.D."/>
            <person name="Blanchette R.A."/>
            <person name="Henrissat B."/>
            <person name="Martin F."/>
            <person name="Cullen D."/>
            <person name="Hibbett D.S."/>
            <person name="Grigoriev I.V."/>
        </authorList>
    </citation>
    <scope>NUCLEOTIDE SEQUENCE [LARGE SCALE GENOMIC DNA]</scope>
    <source>
        <strain>CBS 339.88</strain>
    </source>
</reference>
<reference key="3">
    <citation type="journal article" date="1995" name="J. Biol. Chem.">
        <title>Action of alpha-amanitin during pyrophosphorolysis and elongation by RNA polymerase II.</title>
        <authorList>
            <person name="Chafin D.R."/>
            <person name="Guo H."/>
            <person name="Price D.H."/>
        </authorList>
    </citation>
    <scope>FUNCTION</scope>
</reference>
<reference key="4">
    <citation type="journal article" date="1996" name="J. Biol. Chem.">
        <title>Amanitin greatly reduces the rate of transcription by RNA polymerase II ternary complexes but fails to inhibit some transcript cleavage modes.</title>
        <authorList>
            <person name="Rudd M.D."/>
            <person name="Luse D.S."/>
        </authorList>
    </citation>
    <scope>FUNCTION</scope>
</reference>
<reference key="5">
    <citation type="journal article" date="2002" name="J. Toxicol. Clin. Toxicol.">
        <title>Treatment of amatoxin poisoning: 20-year retrospective analysis.</title>
        <authorList>
            <person name="Enjalbert F."/>
            <person name="Rapior S."/>
            <person name="Nouguier-Soule J."/>
            <person name="Guillon S."/>
            <person name="Amouroux N."/>
            <person name="Cabot C."/>
        </authorList>
    </citation>
    <scope>REVIEW ON TOXICITY</scope>
</reference>
<reference key="6">
    <citation type="journal article" date="2017" name="Nat. Commun.">
        <title>Characterization of a dual function macrocyclase enables design and use of efficient macrocyclization substrates.</title>
        <authorList>
            <person name="Czekster C.M."/>
            <person name="Ludewig H."/>
            <person name="McMahon S.A."/>
            <person name="Naismith J.H."/>
        </authorList>
    </citation>
    <scope>X-RAY CRYSTALLOGRAPHY (1.44 ANGSTROMS) OF 11-35</scope>
</reference>
<gene>
    <name evidence="7" type="primary">AMA1-1</name>
    <name type="ORF">GALMADRAFT_1387421</name>
</gene>
<feature type="propeptide" id="PRO_0000443564" evidence="1">
    <location>
        <begin position="1"/>
        <end position="10"/>
    </location>
</feature>
<feature type="peptide" id="PRO_0000443565" description="Alpha-amanitin" evidence="1">
    <location>
        <begin position="11"/>
        <end position="18"/>
    </location>
</feature>
<feature type="propeptide" id="PRO_0000443566" evidence="1">
    <location>
        <begin position="19"/>
        <end position="35"/>
    </location>
</feature>
<feature type="modified residue" description="(3R,4R)-4,5-dihydroxyisoleucine; in form alpha-amanitin" evidence="2">
    <location>
        <position position="11"/>
    </location>
</feature>
<feature type="modified residue" description="(3R,4S)-4-hydroxyisoleucine; in form gamma-amanitin" evidence="2">
    <location>
        <position position="11"/>
    </location>
</feature>
<feature type="modified residue" description="4-hydroxyproline" evidence="2">
    <location>
        <position position="18"/>
    </location>
</feature>
<feature type="cross-link" description="Cyclopeptide (Ile-Pro)" evidence="2">
    <location>
        <begin position="11"/>
        <end position="18"/>
    </location>
</feature>
<feature type="cross-link" description="2'-cysteinyl-6'-hydroxytryptophan sulfoxide (Trp-Cys)" evidence="2">
    <location>
        <begin position="12"/>
        <end position="16"/>
    </location>
</feature>
<feature type="helix" evidence="12">
    <location>
        <begin position="5"/>
        <end position="8"/>
    </location>
</feature>
<feature type="turn" evidence="11">
    <location>
        <begin position="21"/>
        <end position="23"/>
    </location>
</feature>
<feature type="turn" evidence="11">
    <location>
        <begin position="27"/>
        <end position="33"/>
    </location>
</feature>